<proteinExistence type="evidence at protein level"/>
<organism>
    <name type="scientific">Solanum habrochaites</name>
    <name type="common">Wild tomato</name>
    <name type="synonym">Lycopersicon hirsutum</name>
    <dbReference type="NCBI Taxonomy" id="62890"/>
    <lineage>
        <taxon>Eukaryota</taxon>
        <taxon>Viridiplantae</taxon>
        <taxon>Streptophyta</taxon>
        <taxon>Embryophyta</taxon>
        <taxon>Tracheophyta</taxon>
        <taxon>Spermatophyta</taxon>
        <taxon>Magnoliopsida</taxon>
        <taxon>eudicotyledons</taxon>
        <taxon>Gunneridae</taxon>
        <taxon>Pentapetalae</taxon>
        <taxon>asterids</taxon>
        <taxon>lamiids</taxon>
        <taxon>Solanales</taxon>
        <taxon>Solanaceae</taxon>
        <taxon>Solanoideae</taxon>
        <taxon>Solaneae</taxon>
        <taxon>Solanum</taxon>
        <taxon>Solanum subgen. Lycopersicon</taxon>
    </lineage>
</organism>
<gene>
    <name evidence="7" type="primary">eIF4E</name>
</gene>
<sequence>MAAAEMERTMSFDAAEKLKAADGGGGEVDDELEEGEIVEESNDTASYLGKEITVKHPLEHSWTFWFDNSTTKSRQTAWGSSLRNLYTFSTVEDFWGAYNNIHHPSKLIMGADFHCFKHKIEPQWEDPVCANGGTWKMSFSKGKSDTSWLYTLLAMIGHQFDHGDEICGAVVSVRAKGEKIALWTKNAANETAQVSIGKQWKQFLDYSDSVGFIFHDDAKRLDRSAKNRYTV</sequence>
<name>IF4E1_SOLHA</name>
<protein>
    <recommendedName>
        <fullName evidence="7">Eukaryotic translation initiation factor 4E-1</fullName>
        <shortName evidence="7">eIF4E-1</shortName>
    </recommendedName>
    <alternativeName>
        <fullName evidence="8">eIF-4F 25 kDa subunit</fullName>
    </alternativeName>
    <alternativeName>
        <fullName evidence="8">eIF-4F p26 subunit</fullName>
    </alternativeName>
    <alternativeName>
        <fullName evidence="8">mRNA cap-binding protein</fullName>
    </alternativeName>
</protein>
<feature type="chain" id="PRO_0000454059" description="Eukaryotic translation initiation factor 4E-1">
    <location>
        <begin position="1"/>
        <end position="231"/>
    </location>
</feature>
<feature type="region of interest" description="EIF4G-binding" evidence="3">
    <location>
        <begin position="56"/>
        <end position="59"/>
    </location>
</feature>
<feature type="region of interest" description="EIF4G-binding" evidence="3">
    <location>
        <begin position="66"/>
        <end position="102"/>
    </location>
</feature>
<feature type="region of interest" description="EIF4G-binding" evidence="3">
    <location>
        <begin position="150"/>
        <end position="159"/>
    </location>
</feature>
<feature type="binding site" evidence="2">
    <location>
        <begin position="74"/>
        <end position="79"/>
    </location>
    <ligand>
        <name>mRNA</name>
        <dbReference type="ChEBI" id="CHEBI:33699"/>
    </ligand>
    <ligandPart>
        <name>N(7)-methylguanosine 5'-triphosphate group</name>
        <dbReference type="ChEBI" id="CHEBI:74429"/>
        <note>m7GTP residue in mRNA cap</note>
    </ligandPart>
</feature>
<feature type="binding site" evidence="2">
    <location>
        <position position="106"/>
    </location>
    <ligand>
        <name>mRNA</name>
        <dbReference type="ChEBI" id="CHEBI:33699"/>
    </ligand>
    <ligandPart>
        <name>N(7)-methylguanosine 5'-triphosphate group</name>
        <dbReference type="ChEBI" id="CHEBI:74429"/>
        <note>m7GTP residue in mRNA cap</note>
    </ligandPart>
</feature>
<feature type="binding site" evidence="2">
    <location>
        <begin position="124"/>
        <end position="125"/>
    </location>
    <ligand>
        <name>mRNA</name>
        <dbReference type="ChEBI" id="CHEBI:33699"/>
    </ligand>
    <ligandPart>
        <name>N(7)-methylguanosine 5'-triphosphate group</name>
        <dbReference type="ChEBI" id="CHEBI:74429"/>
        <note>m7GTP residue in mRNA cap</note>
    </ligandPart>
</feature>
<feature type="binding site" evidence="2">
    <location>
        <begin position="174"/>
        <end position="179"/>
    </location>
    <ligand>
        <name>mRNA</name>
        <dbReference type="ChEBI" id="CHEBI:33699"/>
    </ligand>
    <ligandPart>
        <name>N(7)-methylguanosine 5'-triphosphate group</name>
        <dbReference type="ChEBI" id="CHEBI:74429"/>
        <note>m7GTP residue in mRNA cap</note>
    </ligandPart>
</feature>
<feature type="binding site" evidence="3">
    <location>
        <begin position="219"/>
        <end position="223"/>
    </location>
    <ligand>
        <name>mRNA</name>
        <dbReference type="ChEBI" id="CHEBI:33699"/>
    </ligand>
    <ligandPart>
        <name>N(7)-methylguanosine 5'-triphosphate group</name>
        <dbReference type="ChEBI" id="CHEBI:74429"/>
        <note>m7GTP residue in mRNA cap</note>
    </ligandPart>
</feature>
<feature type="disulfide bond" evidence="2">
    <location>
        <begin position="129"/>
        <end position="167"/>
    </location>
</feature>
<feature type="sequence variant" description="In strain: PI 247087, allele pot-1." evidence="4 5 6">
    <original>L</original>
    <variation>F</variation>
    <location>
        <position position="48"/>
    </location>
</feature>
<feature type="sequence variant" description="In strain: PI 247087, allele pot-1." evidence="4 5 6">
    <original>N</original>
    <variation>K</variation>
    <location>
        <position position="68"/>
    </location>
</feature>
<feature type="sequence variant" description="In strain: PI 247087, allele pot-1." evidence="4 5 6">
    <original>A</original>
    <variation>D</variation>
    <location>
        <position position="77"/>
    </location>
</feature>
<feature type="sequence variant" description="In strain: PI 247087, allele pot-1." evidence="4 5 6">
    <original>M</original>
    <variation>I</variation>
    <location>
        <position position="109"/>
    </location>
</feature>
<evidence type="ECO:0000250" key="1">
    <source>
        <dbReference type="UniProtKB" id="K0P2S0"/>
    </source>
</evidence>
<evidence type="ECO:0000250" key="2">
    <source>
        <dbReference type="UniProtKB" id="P29557"/>
    </source>
</evidence>
<evidence type="ECO:0000250" key="3">
    <source>
        <dbReference type="UniProtKB" id="Q00LS8"/>
    </source>
</evidence>
<evidence type="ECO:0000269" key="4">
    <source>
    </source>
</evidence>
<evidence type="ECO:0000269" key="5">
    <source>
    </source>
</evidence>
<evidence type="ECO:0000269" key="6">
    <source>
    </source>
</evidence>
<evidence type="ECO:0000303" key="7">
    <source>
    </source>
</evidence>
<evidence type="ECO:0000305" key="8"/>
<evidence type="ECO:0000305" key="9">
    <source>
    </source>
</evidence>
<evidence type="ECO:0000305" key="10">
    <source>
    </source>
</evidence>
<evidence type="ECO:0000305" key="11">
    <source>
    </source>
</evidence>
<reference key="1">
    <citation type="journal article" date="2005" name="Mol. Genet. Genomics">
        <title>The recessive potyvirus resistance gene pot-1 is the tomato orthologue of the pepper pvr2-eIF4E gene.</title>
        <authorList>
            <person name="Ruffel S."/>
            <person name="Gallois J.L."/>
            <person name="Lesage M.L."/>
            <person name="Caranta C."/>
        </authorList>
    </citation>
    <scope>NUCLEOTIDE SEQUENCE [MRNA]</scope>
    <scope>VARIANTS PHE-48; LYS-68; ASP-77 AND ILE-109</scope>
    <scope>FUNCTION</scope>
    <scope>FUNCTION (MICROBIAL INFECTION)</scope>
    <scope>SUBUNIT (MICROBIAL INFECTION)</scope>
    <scope>POLYMORPHISM</scope>
    <source>
        <strain>cv. PI 134417</strain>
        <strain>cv. PI 247087</strain>
    </source>
</reference>
<reference key="2">
    <citation type="journal article" date="2014" name="Infect. Genet. Evol.">
        <title>Evolution of plant eukaryotic initiation factor 4E (eIF4E) and potyvirus genome-linked protein (VPg): a game of mirrors impacting resistance spectrum and durability.</title>
        <authorList>
            <person name="Moury B."/>
            <person name="Charron C."/>
            <person name="Janzac B."/>
            <person name="Simon V."/>
            <person name="Gallois J.L."/>
            <person name="Palloix A."/>
            <person name="Caranta C."/>
        </authorList>
    </citation>
    <scope>GENE FAMILY</scope>
    <scope>REVIEW</scope>
</reference>
<reference key="3">
    <citation type="journal article" date="2016" name="J. Gen. Virol.">
        <title>A new eIF4E1 allele characterized by RNAseq data mining is associated with resistance to potato virus Y in tomato albeit with a low durability.</title>
        <authorList>
            <person name="Lebaron C."/>
            <person name="Rosado A."/>
            <person name="Sauvage C."/>
            <person name="Gauffier C."/>
            <person name="German-Retana S."/>
            <person name="Moury B."/>
            <person name="Gallois J.-L."/>
        </authorList>
    </citation>
    <scope>FUNCTION</scope>
    <scope>FUNCTION (MICROBIAL INFECTION)</scope>
    <scope>VARIANTS PHE-48; LYS-68; ASP-77 AND ILE-109</scope>
    <scope>SUBUNIT (MICROBIAL INFECTION)</scope>
    <scope>POLYMORPHISM</scope>
    <source>
        <strain>cv. PI 247087</strain>
    </source>
</reference>
<reference key="4">
    <citation type="journal article" date="2016" name="Plant J.">
        <title>A TILLING approach to generate broad-spectrum resistance to potyviruses in tomato is hampered by eIF4E gene redundancy.</title>
        <authorList>
            <person name="Gauffier C."/>
            <person name="Lebaron C."/>
            <person name="Moretti A."/>
            <person name="Constant C."/>
            <person name="Moquet F."/>
            <person name="Bonnet G."/>
            <person name="Caranta C."/>
            <person name="Gallois J.-L."/>
        </authorList>
    </citation>
    <scope>FUNCTION</scope>
    <scope>FUNCTION (MICROBIAL INFECTION)</scope>
    <scope>VARIANTS PHE-48; LYS-68; ASP-77 AND ILE-109</scope>
    <scope>SUBUNIT (MICROBIAL INFECTION)</scope>
    <scope>POLYMORPHISM</scope>
    <source>
        <strain>cv. PI 247087</strain>
    </source>
</reference>
<keyword id="KW-0963">Cytoplasm</keyword>
<keyword id="KW-1015">Disulfide bond</keyword>
<keyword id="KW-0945">Host-virus interaction</keyword>
<keyword id="KW-0396">Initiation factor</keyword>
<keyword id="KW-0539">Nucleus</keyword>
<keyword id="KW-0611">Plant defense</keyword>
<keyword id="KW-0648">Protein biosynthesis</keyword>
<keyword id="KW-0694">RNA-binding</keyword>
<keyword id="KW-0810">Translation regulation</keyword>
<comment type="function">
    <text evidence="4 5 6">Component of the protein complex eIF4F, which is involved in the recognition of the mRNA cap, ATP-dependent unwinding of 5'-terminal secondary structure and recruitment of mRNA to the ribosome (PubMed:26850324). Recognizes and binds the 7-methylguanosine-containing mRNA cap during an early step in the initiation of protein synthesis and facilitates ribosome binding by inducing the unwinding of the mRNAs secondary structures (PubMed:26850324). Key component of recessive resistance to potyviruses (PubMed:15971038, PubMed:26850324, PubMed:27655175).</text>
</comment>
<comment type="function">
    <text evidence="4 5 6">(Microbial infection) Susceptibility host factor required for viral infection (e.g. pepper mottle virus (PepMoV), potato virus Y (PVY) and tobacco etch virus (TEV)) by recruiting viral RNAs to the host ribosomal complex via an interaction with viral genome-linked protein (VPg).</text>
</comment>
<comment type="subunit">
    <text evidence="2">EIF4F is a multi-subunit complex, the composition of which varies with external and internal environmental conditions (By similarity). It is composed of at least EIF4A, EIF4E and EIF4G (By similarity). EIF4E is also known to interact with other partners (By similarity). In higher plants two isoforms of EIF4F have been identified, named isoform EIF4F and isoform EIF(iso)4F (By similarity). Isoform EIF4F has subunits p220 and p26, whereas isoform EIF(iso)4F has subunits p82 and p28 (By similarity).</text>
</comment>
<comment type="subunit">
    <text evidence="9 10 11">(Microbial infection) Interacts with potyvirus viral genome-linked protein (VPg); this interaction is possible in susceptible hosts but impaired in resistant plants.</text>
</comment>
<comment type="subcellular location">
    <subcellularLocation>
        <location evidence="1">Nucleus</location>
    </subcellularLocation>
    <subcellularLocation>
        <location evidence="1">Cytoplasm</location>
    </subcellularLocation>
</comment>
<comment type="PTM">
    <text evidence="2">According to the redox status, the Cys-129-Cys-167 disulfide bridge may have a role in regulating protein function by affecting its ability to bind capped mRNA.</text>
</comment>
<comment type="polymorphism">
    <text evidence="4 5 6">Variant present in the strain cv. PI 247087, allele pot-1, exhibits a functional mRNA capping activity and an increased resistance to potyviruses (e.g. pepper mottle virus (PepMoV), potato virus Y (PVY) and tobacco etch virus (TEV)).</text>
</comment>
<comment type="miscellaneous">
    <text evidence="4 6">Displayed sequence is cv. PI 134417 and confers susceptibility to potyviruses (e.g. potato virus Y (PVY) and tobacco etch virus (TEV)).</text>
</comment>
<comment type="similarity">
    <text evidence="8">Belongs to the eukaryotic initiation factor 4E family.</text>
</comment>
<accession>Q4VQY1</accession>
<accession>Q4VQY0</accession>
<dbReference type="EMBL" id="AY723735">
    <property type="protein sequence ID" value="AAV88612.1"/>
    <property type="molecule type" value="mRNA"/>
</dbReference>
<dbReference type="EMBL" id="AY723736">
    <property type="protein sequence ID" value="AAV88613.1"/>
    <property type="molecule type" value="mRNA"/>
</dbReference>
<dbReference type="SMR" id="Q4VQY1"/>
<dbReference type="GO" id="GO:0005737">
    <property type="term" value="C:cytoplasm"/>
    <property type="evidence" value="ECO:0000250"/>
    <property type="project" value="UniProtKB"/>
</dbReference>
<dbReference type="GO" id="GO:0016281">
    <property type="term" value="C:eukaryotic translation initiation factor 4F complex"/>
    <property type="evidence" value="ECO:0007669"/>
    <property type="project" value="TreeGrafter"/>
</dbReference>
<dbReference type="GO" id="GO:0005634">
    <property type="term" value="C:nucleus"/>
    <property type="evidence" value="ECO:0000250"/>
    <property type="project" value="UniProtKB"/>
</dbReference>
<dbReference type="GO" id="GO:0000340">
    <property type="term" value="F:RNA 7-methylguanosine cap binding"/>
    <property type="evidence" value="ECO:0007669"/>
    <property type="project" value="TreeGrafter"/>
</dbReference>
<dbReference type="GO" id="GO:0003723">
    <property type="term" value="F:RNA binding"/>
    <property type="evidence" value="ECO:0000314"/>
    <property type="project" value="UniProtKB"/>
</dbReference>
<dbReference type="GO" id="GO:0003743">
    <property type="term" value="F:translation initiation factor activity"/>
    <property type="evidence" value="ECO:0000314"/>
    <property type="project" value="UniProtKB"/>
</dbReference>
<dbReference type="GO" id="GO:0051607">
    <property type="term" value="P:defense response to virus"/>
    <property type="evidence" value="ECO:0000315"/>
    <property type="project" value="UniProtKB"/>
</dbReference>
<dbReference type="GO" id="GO:0006417">
    <property type="term" value="P:regulation of translation"/>
    <property type="evidence" value="ECO:0007669"/>
    <property type="project" value="UniProtKB-KW"/>
</dbReference>
<dbReference type="GO" id="GO:0006413">
    <property type="term" value="P:translational initiation"/>
    <property type="evidence" value="ECO:0000314"/>
    <property type="project" value="UniProtKB"/>
</dbReference>
<dbReference type="FunFam" id="3.30.760.10:FF:000003">
    <property type="entry name" value="Eukaryotic translation initiation factor 4E"/>
    <property type="match status" value="1"/>
</dbReference>
<dbReference type="Gene3D" id="3.30.760.10">
    <property type="entry name" value="RNA Cap, Translation Initiation Factor Eif4e"/>
    <property type="match status" value="1"/>
</dbReference>
<dbReference type="InterPro" id="IPR023398">
    <property type="entry name" value="TIF_eIF4e-like"/>
</dbReference>
<dbReference type="InterPro" id="IPR001040">
    <property type="entry name" value="TIF_eIF_4E"/>
</dbReference>
<dbReference type="PANTHER" id="PTHR11960">
    <property type="entry name" value="EUKARYOTIC TRANSLATION INITIATION FACTOR 4E RELATED"/>
    <property type="match status" value="1"/>
</dbReference>
<dbReference type="PANTHER" id="PTHR11960:SF43">
    <property type="entry name" value="EUKARYOTIC TRANSLATION INITIATION FACTOR 4E-1"/>
    <property type="match status" value="1"/>
</dbReference>
<dbReference type="Pfam" id="PF01652">
    <property type="entry name" value="IF4E"/>
    <property type="match status" value="1"/>
</dbReference>
<dbReference type="SUPFAM" id="SSF55418">
    <property type="entry name" value="eIF4e-like"/>
    <property type="match status" value="1"/>
</dbReference>